<keyword id="KW-0029">Amino-acid transport</keyword>
<keyword id="KW-0067">ATP-binding</keyword>
<keyword id="KW-0997">Cell inner membrane</keyword>
<keyword id="KW-1003">Cell membrane</keyword>
<keyword id="KW-0472">Membrane</keyword>
<keyword id="KW-0547">Nucleotide-binding</keyword>
<keyword id="KW-1185">Reference proteome</keyword>
<keyword id="KW-1278">Translocase</keyword>
<keyword id="KW-0813">Transport</keyword>
<gene>
    <name evidence="1" type="primary">metN</name>
    <name type="ordered locus">Z0211</name>
    <name type="ordered locus">ECs0201</name>
</gene>
<accession>P63356</accession>
<accession>Q8X7Z9</accession>
<proteinExistence type="inferred from homology"/>
<name>METN_ECO57</name>
<evidence type="ECO:0000255" key="1">
    <source>
        <dbReference type="HAMAP-Rule" id="MF_01719"/>
    </source>
</evidence>
<organism>
    <name type="scientific">Escherichia coli O157:H7</name>
    <dbReference type="NCBI Taxonomy" id="83334"/>
    <lineage>
        <taxon>Bacteria</taxon>
        <taxon>Pseudomonadati</taxon>
        <taxon>Pseudomonadota</taxon>
        <taxon>Gammaproteobacteria</taxon>
        <taxon>Enterobacterales</taxon>
        <taxon>Enterobacteriaceae</taxon>
        <taxon>Escherichia</taxon>
    </lineage>
</organism>
<sequence length="343" mass="37802">MIKLSNITKVFHQGTRTIQALNNVSLHVPAGQIYGVIGASGAGKSTLIRCVNLLERPTEGSVLVDGQELTTLSESELTKARRQIGMIFQHFNLLSSRTVFGNVALPLELDNTPKDEIKRRVTELLSLVGLGDKHDSYPSNLSGGQKQRVAIARALASNPKVLLCDEATSALDPATTRSILELLKDINRRLGLTILLITHEMDVVKRICDCVAVISNGELIEQDTVSEVFSHPKTPLAQKFIQSTLHLDIPEDYQERLQAEPFTDCVPMLRLEFTGQSVDAPLLSETARRFNVNNNIISAQMDYAGGVKFGIMLTEMHGTQQDTQAAIAWLQEHHVKVEVLGYV</sequence>
<dbReference type="EC" id="7.4.2.11" evidence="1"/>
<dbReference type="EMBL" id="AE005174">
    <property type="protein sequence ID" value="AAG54501.1"/>
    <property type="molecule type" value="Genomic_DNA"/>
</dbReference>
<dbReference type="EMBL" id="BA000007">
    <property type="protein sequence ID" value="BAB33624.1"/>
    <property type="molecule type" value="Genomic_DNA"/>
</dbReference>
<dbReference type="PIR" id="A85505">
    <property type="entry name" value="A85505"/>
</dbReference>
<dbReference type="PIR" id="A90654">
    <property type="entry name" value="A90654"/>
</dbReference>
<dbReference type="RefSeq" id="NP_308228.1">
    <property type="nucleotide sequence ID" value="NC_002695.1"/>
</dbReference>
<dbReference type="RefSeq" id="WP_000593994.1">
    <property type="nucleotide sequence ID" value="NZ_VOAI01000002.1"/>
</dbReference>
<dbReference type="SMR" id="P63356"/>
<dbReference type="STRING" id="155864.Z0211"/>
<dbReference type="GeneID" id="913972"/>
<dbReference type="GeneID" id="93777224"/>
<dbReference type="KEGG" id="ece:Z0211"/>
<dbReference type="KEGG" id="ecs:ECs_0201"/>
<dbReference type="PATRIC" id="fig|386585.9.peg.305"/>
<dbReference type="eggNOG" id="COG1135">
    <property type="taxonomic scope" value="Bacteria"/>
</dbReference>
<dbReference type="HOGENOM" id="CLU_000604_1_3_6"/>
<dbReference type="OMA" id="FANPKHA"/>
<dbReference type="Proteomes" id="UP000000558">
    <property type="component" value="Chromosome"/>
</dbReference>
<dbReference type="Proteomes" id="UP000002519">
    <property type="component" value="Chromosome"/>
</dbReference>
<dbReference type="GO" id="GO:0009276">
    <property type="term" value="C:Gram-negative-bacterium-type cell wall"/>
    <property type="evidence" value="ECO:0007669"/>
    <property type="project" value="InterPro"/>
</dbReference>
<dbReference type="GO" id="GO:0005886">
    <property type="term" value="C:plasma membrane"/>
    <property type="evidence" value="ECO:0007669"/>
    <property type="project" value="UniProtKB-SubCell"/>
</dbReference>
<dbReference type="GO" id="GO:0033232">
    <property type="term" value="F:ABC-type D-methionine transporter activity"/>
    <property type="evidence" value="ECO:0007669"/>
    <property type="project" value="UniProtKB-EC"/>
</dbReference>
<dbReference type="GO" id="GO:0005524">
    <property type="term" value="F:ATP binding"/>
    <property type="evidence" value="ECO:0007669"/>
    <property type="project" value="UniProtKB-KW"/>
</dbReference>
<dbReference type="GO" id="GO:0016887">
    <property type="term" value="F:ATP hydrolysis activity"/>
    <property type="evidence" value="ECO:0007669"/>
    <property type="project" value="InterPro"/>
</dbReference>
<dbReference type="CDD" id="cd03258">
    <property type="entry name" value="ABC_MetN_methionine_transporter"/>
    <property type="match status" value="1"/>
</dbReference>
<dbReference type="FunFam" id="3.30.70.260:FF:000014">
    <property type="entry name" value="Methionine import ATP-binding protein MetN"/>
    <property type="match status" value="1"/>
</dbReference>
<dbReference type="FunFam" id="3.40.50.300:FF:000233">
    <property type="entry name" value="Methionine import ATP-binding protein MetN"/>
    <property type="match status" value="1"/>
</dbReference>
<dbReference type="Gene3D" id="3.30.70.260">
    <property type="match status" value="1"/>
</dbReference>
<dbReference type="Gene3D" id="3.40.50.300">
    <property type="entry name" value="P-loop containing nucleotide triphosphate hydrolases"/>
    <property type="match status" value="1"/>
</dbReference>
<dbReference type="InterPro" id="IPR003593">
    <property type="entry name" value="AAA+_ATPase"/>
</dbReference>
<dbReference type="InterPro" id="IPR012692">
    <property type="entry name" value="ABC_MetN_proteobac"/>
</dbReference>
<dbReference type="InterPro" id="IPR003439">
    <property type="entry name" value="ABC_transporter-like_ATP-bd"/>
</dbReference>
<dbReference type="InterPro" id="IPR017871">
    <property type="entry name" value="ABC_transporter-like_CS"/>
</dbReference>
<dbReference type="InterPro" id="IPR045865">
    <property type="entry name" value="ACT-like_dom_sf"/>
</dbReference>
<dbReference type="InterPro" id="IPR041701">
    <property type="entry name" value="MetN_ABC"/>
</dbReference>
<dbReference type="InterPro" id="IPR050086">
    <property type="entry name" value="MetN_ABC_transporter-like"/>
</dbReference>
<dbReference type="InterPro" id="IPR018449">
    <property type="entry name" value="NIL_domain"/>
</dbReference>
<dbReference type="InterPro" id="IPR027417">
    <property type="entry name" value="P-loop_NTPase"/>
</dbReference>
<dbReference type="NCBIfam" id="TIGR02314">
    <property type="entry name" value="ABC_MetN"/>
    <property type="match status" value="1"/>
</dbReference>
<dbReference type="PANTHER" id="PTHR43166">
    <property type="entry name" value="AMINO ACID IMPORT ATP-BINDING PROTEIN"/>
    <property type="match status" value="1"/>
</dbReference>
<dbReference type="PANTHER" id="PTHR43166:SF30">
    <property type="entry name" value="METHIONINE IMPORT ATP-BINDING PROTEIN METN"/>
    <property type="match status" value="1"/>
</dbReference>
<dbReference type="Pfam" id="PF00005">
    <property type="entry name" value="ABC_tran"/>
    <property type="match status" value="1"/>
</dbReference>
<dbReference type="Pfam" id="PF09383">
    <property type="entry name" value="NIL"/>
    <property type="match status" value="1"/>
</dbReference>
<dbReference type="SMART" id="SM00382">
    <property type="entry name" value="AAA"/>
    <property type="match status" value="1"/>
</dbReference>
<dbReference type="SMART" id="SM00930">
    <property type="entry name" value="NIL"/>
    <property type="match status" value="1"/>
</dbReference>
<dbReference type="SUPFAM" id="SSF55021">
    <property type="entry name" value="ACT-like"/>
    <property type="match status" value="1"/>
</dbReference>
<dbReference type="SUPFAM" id="SSF52540">
    <property type="entry name" value="P-loop containing nucleoside triphosphate hydrolases"/>
    <property type="match status" value="1"/>
</dbReference>
<dbReference type="PROSITE" id="PS00211">
    <property type="entry name" value="ABC_TRANSPORTER_1"/>
    <property type="match status" value="1"/>
</dbReference>
<dbReference type="PROSITE" id="PS50893">
    <property type="entry name" value="ABC_TRANSPORTER_2"/>
    <property type="match status" value="1"/>
</dbReference>
<dbReference type="PROSITE" id="PS51264">
    <property type="entry name" value="METN"/>
    <property type="match status" value="1"/>
</dbReference>
<comment type="function">
    <text evidence="1">Part of the ABC transporter complex MetNIQ involved in methionine import. Responsible for energy coupling to the transport system.</text>
</comment>
<comment type="catalytic activity">
    <reaction evidence="1">
        <text>L-methionine(out) + ATP + H2O = L-methionine(in) + ADP + phosphate + H(+)</text>
        <dbReference type="Rhea" id="RHEA:29779"/>
        <dbReference type="ChEBI" id="CHEBI:15377"/>
        <dbReference type="ChEBI" id="CHEBI:15378"/>
        <dbReference type="ChEBI" id="CHEBI:30616"/>
        <dbReference type="ChEBI" id="CHEBI:43474"/>
        <dbReference type="ChEBI" id="CHEBI:57844"/>
        <dbReference type="ChEBI" id="CHEBI:456216"/>
        <dbReference type="EC" id="7.4.2.11"/>
    </reaction>
</comment>
<comment type="catalytic activity">
    <reaction evidence="1">
        <text>D-methionine(out) + ATP + H2O = D-methionine(in) + ADP + phosphate + H(+)</text>
        <dbReference type="Rhea" id="RHEA:29767"/>
        <dbReference type="ChEBI" id="CHEBI:15377"/>
        <dbReference type="ChEBI" id="CHEBI:15378"/>
        <dbReference type="ChEBI" id="CHEBI:30616"/>
        <dbReference type="ChEBI" id="CHEBI:43474"/>
        <dbReference type="ChEBI" id="CHEBI:57932"/>
        <dbReference type="ChEBI" id="CHEBI:456216"/>
        <dbReference type="EC" id="7.4.2.11"/>
    </reaction>
</comment>
<comment type="subunit">
    <text evidence="1">The complex is composed of two ATP-binding proteins (MetN), two transmembrane proteins (MetI) and a solute-binding protein (MetQ).</text>
</comment>
<comment type="subcellular location">
    <subcellularLocation>
        <location evidence="1">Cell inner membrane</location>
        <topology evidence="1">Peripheral membrane protein</topology>
    </subcellularLocation>
</comment>
<comment type="similarity">
    <text evidence="1">Belongs to the ABC transporter superfamily. Methionine importer (TC 3.A.1.24) family.</text>
</comment>
<reference key="1">
    <citation type="journal article" date="2001" name="Nature">
        <title>Genome sequence of enterohaemorrhagic Escherichia coli O157:H7.</title>
        <authorList>
            <person name="Perna N.T."/>
            <person name="Plunkett G. III"/>
            <person name="Burland V."/>
            <person name="Mau B."/>
            <person name="Glasner J.D."/>
            <person name="Rose D.J."/>
            <person name="Mayhew G.F."/>
            <person name="Evans P.S."/>
            <person name="Gregor J."/>
            <person name="Kirkpatrick H.A."/>
            <person name="Posfai G."/>
            <person name="Hackett J."/>
            <person name="Klink S."/>
            <person name="Boutin A."/>
            <person name="Shao Y."/>
            <person name="Miller L."/>
            <person name="Grotbeck E.J."/>
            <person name="Davis N.W."/>
            <person name="Lim A."/>
            <person name="Dimalanta E.T."/>
            <person name="Potamousis K."/>
            <person name="Apodaca J."/>
            <person name="Anantharaman T.S."/>
            <person name="Lin J."/>
            <person name="Yen G."/>
            <person name="Schwartz D.C."/>
            <person name="Welch R.A."/>
            <person name="Blattner F.R."/>
        </authorList>
    </citation>
    <scope>NUCLEOTIDE SEQUENCE [LARGE SCALE GENOMIC DNA]</scope>
    <source>
        <strain>O157:H7 / EDL933 / ATCC 700927 / EHEC</strain>
    </source>
</reference>
<reference key="2">
    <citation type="journal article" date="2001" name="DNA Res.">
        <title>Complete genome sequence of enterohemorrhagic Escherichia coli O157:H7 and genomic comparison with a laboratory strain K-12.</title>
        <authorList>
            <person name="Hayashi T."/>
            <person name="Makino K."/>
            <person name="Ohnishi M."/>
            <person name="Kurokawa K."/>
            <person name="Ishii K."/>
            <person name="Yokoyama K."/>
            <person name="Han C.-G."/>
            <person name="Ohtsubo E."/>
            <person name="Nakayama K."/>
            <person name="Murata T."/>
            <person name="Tanaka M."/>
            <person name="Tobe T."/>
            <person name="Iida T."/>
            <person name="Takami H."/>
            <person name="Honda T."/>
            <person name="Sasakawa C."/>
            <person name="Ogasawara N."/>
            <person name="Yasunaga T."/>
            <person name="Kuhara S."/>
            <person name="Shiba T."/>
            <person name="Hattori M."/>
            <person name="Shinagawa H."/>
        </authorList>
    </citation>
    <scope>NUCLEOTIDE SEQUENCE [LARGE SCALE GENOMIC DNA]</scope>
    <source>
        <strain>O157:H7 / Sakai / RIMD 0509952 / EHEC</strain>
    </source>
</reference>
<feature type="chain" id="PRO_0000092505" description="Methionine import ATP-binding protein MetN">
    <location>
        <begin position="1"/>
        <end position="343"/>
    </location>
</feature>
<feature type="domain" description="ABC transporter" evidence="1">
    <location>
        <begin position="2"/>
        <end position="241"/>
    </location>
</feature>
<feature type="binding site" evidence="1">
    <location>
        <begin position="38"/>
        <end position="45"/>
    </location>
    <ligand>
        <name>ATP</name>
        <dbReference type="ChEBI" id="CHEBI:30616"/>
    </ligand>
</feature>
<protein>
    <recommendedName>
        <fullName evidence="1">Methionine import ATP-binding protein MetN</fullName>
        <ecNumber evidence="1">7.4.2.11</ecNumber>
    </recommendedName>
</protein>